<reference key="1">
    <citation type="journal article" date="2006" name="FEBS Lett.">
        <title>Some aspects of the venom proteome of the Colubridae snake Philodryas olfersii revealed from a Duvernoy's (venom) gland transcriptome.</title>
        <authorList>
            <person name="Ching A.T.C."/>
            <person name="Rocha M.M.T."/>
            <person name="Paes Leme A.F."/>
            <person name="Pimenta D.C."/>
            <person name="Furtado M.F.D."/>
            <person name="Serrano S.M.T."/>
            <person name="Ho P.L."/>
            <person name="Junqueira-de-Azevedo I.L.M."/>
        </authorList>
    </citation>
    <scope>NUCLEOTIDE SEQUENCE [MRNA]</scope>
    <source>
        <tissue>Venom gland</tissue>
    </source>
</reference>
<reference key="2">
    <citation type="journal article" date="2006" name="FEBS Lett.">
        <authorList>
            <person name="Ching A.T.C."/>
            <person name="Rocha M.M.T."/>
            <person name="Paes Leme A.F."/>
            <person name="Pimenta D.C."/>
            <person name="Furtado M.F.D."/>
            <person name="Serrano S.M.T."/>
            <person name="Ho P.L."/>
            <person name="Junqueira-de-Azevedo I.L.M."/>
        </authorList>
    </citation>
    <scope>ERRATUM OF PUBMED:16857193</scope>
</reference>
<feature type="signal peptide" evidence="2">
    <location>
        <begin position="1"/>
        <end position="20"/>
    </location>
</feature>
<feature type="propeptide" id="PRO_0000296370" evidence="1">
    <location>
        <begin position="21"/>
        <end position="24"/>
    </location>
</feature>
<feature type="chain" id="PRO_0000296371" description="Snake venom serine protease">
    <location>
        <begin position="25"/>
        <end position="261"/>
    </location>
</feature>
<feature type="domain" description="Peptidase S1" evidence="3">
    <location>
        <begin position="25"/>
        <end position="249"/>
    </location>
</feature>
<feature type="active site" description="Charge relay system" evidence="1">
    <location>
        <position position="65"/>
    </location>
</feature>
<feature type="active site" description="Charge relay system" evidence="1">
    <location>
        <position position="110"/>
    </location>
</feature>
<feature type="active site" description="Charge relay system" evidence="1">
    <location>
        <position position="204"/>
    </location>
</feature>
<feature type="glycosylation site" description="N-linked (GlcNAc...) asparagine" evidence="2">
    <location>
        <position position="103"/>
    </location>
</feature>
<feature type="glycosylation site" description="N-linked (GlcNAc...) asparagine" evidence="2">
    <location>
        <position position="117"/>
    </location>
</feature>
<feature type="glycosylation site" description="N-linked (GlcNAc...) asparagine" evidence="2">
    <location>
        <position position="121"/>
    </location>
</feature>
<feature type="disulfide bond" evidence="3">
    <location>
        <begin position="31"/>
        <end position="163"/>
    </location>
</feature>
<feature type="disulfide bond" evidence="3">
    <location>
        <begin position="50"/>
        <end position="66"/>
    </location>
</feature>
<feature type="disulfide bond" evidence="3">
    <location>
        <begin position="98"/>
        <end position="256"/>
    </location>
</feature>
<feature type="disulfide bond" evidence="3">
    <location>
        <begin position="142"/>
        <end position="210"/>
    </location>
</feature>
<feature type="disulfide bond" evidence="3">
    <location>
        <begin position="174"/>
        <end position="189"/>
    </location>
</feature>
<feature type="disulfide bond" evidence="3">
    <location>
        <begin position="200"/>
        <end position="225"/>
    </location>
</feature>
<proteinExistence type="evidence at transcript level"/>
<organism>
    <name type="scientific">Philodryas olfersii</name>
    <name type="common">Green snake</name>
    <dbReference type="NCBI Taxonomy" id="120305"/>
    <lineage>
        <taxon>Eukaryota</taxon>
        <taxon>Metazoa</taxon>
        <taxon>Chordata</taxon>
        <taxon>Craniata</taxon>
        <taxon>Vertebrata</taxon>
        <taxon>Euteleostomi</taxon>
        <taxon>Lepidosauria</taxon>
        <taxon>Squamata</taxon>
        <taxon>Bifurcata</taxon>
        <taxon>Unidentata</taxon>
        <taxon>Episquamata</taxon>
        <taxon>Toxicofera</taxon>
        <taxon>Serpentes</taxon>
        <taxon>Colubroidea</taxon>
        <taxon>Dipsadidae</taxon>
        <taxon>Philodryas</taxon>
    </lineage>
</organism>
<accession>Q09GK1</accession>
<keyword id="KW-1015">Disulfide bond</keyword>
<keyword id="KW-0325">Glycoprotein</keyword>
<keyword id="KW-1199">Hemostasis impairing toxin</keyword>
<keyword id="KW-0378">Hydrolase</keyword>
<keyword id="KW-0645">Protease</keyword>
<keyword id="KW-0964">Secreted</keyword>
<keyword id="KW-0720">Serine protease</keyword>
<keyword id="KW-0732">Signal</keyword>
<keyword id="KW-0800">Toxin</keyword>
<keyword id="KW-0865">Zymogen</keyword>
<comment type="function">
    <text evidence="1">Snake venom serine protease that may act in the hemostasis system of the prey.</text>
</comment>
<comment type="subunit">
    <text evidence="1">Monomer.</text>
</comment>
<comment type="subcellular location">
    <subcellularLocation>
        <location>Secreted</location>
    </subcellularLocation>
</comment>
<comment type="tissue specificity">
    <text>Expressed by the venom gland.</text>
</comment>
<comment type="similarity">
    <text evidence="3">Belongs to the peptidase S1 family. Snake venom subfamily.</text>
</comment>
<name>VSP_PHIOL</name>
<sequence>MALIGVLANLLILCLSYARTAPDRIIGGLECNQNEHRSLVLLYNSGGFFCSGTLINHEWVLTAAHCNRENIQIKLGVHNIHVPNEDEQIRVPKEKVCCLGTMNCTQWNQDIMLIRLNSSVNYSTHIAPLSLPSNPPSVGSVCRVMGWGTITSPEVTYPEVPHCVNIQILHKELCEAAYPILLGNSNILCAGKLLGDKDSCKGDSGGPLICNGQIQGIVSWGGFPCAQILEPGVYTKVFDYIDWIQDIMAGNANVICPGDNF</sequence>
<evidence type="ECO:0000250" key="1"/>
<evidence type="ECO:0000255" key="2"/>
<evidence type="ECO:0000255" key="3">
    <source>
        <dbReference type="PROSITE-ProRule" id="PRU00274"/>
    </source>
</evidence>
<dbReference type="EC" id="3.4.21.-"/>
<dbReference type="EMBL" id="DQ912657">
    <property type="protein sequence ID" value="ABI74694.1"/>
    <property type="molecule type" value="mRNA"/>
</dbReference>
<dbReference type="SMR" id="Q09GK1"/>
<dbReference type="MEROPS" id="S01.481"/>
<dbReference type="GO" id="GO:0005576">
    <property type="term" value="C:extracellular region"/>
    <property type="evidence" value="ECO:0007669"/>
    <property type="project" value="UniProtKB-SubCell"/>
</dbReference>
<dbReference type="GO" id="GO:0030141">
    <property type="term" value="C:secretory granule"/>
    <property type="evidence" value="ECO:0007669"/>
    <property type="project" value="TreeGrafter"/>
</dbReference>
<dbReference type="GO" id="GO:0004252">
    <property type="term" value="F:serine-type endopeptidase activity"/>
    <property type="evidence" value="ECO:0007669"/>
    <property type="project" value="InterPro"/>
</dbReference>
<dbReference type="GO" id="GO:0090729">
    <property type="term" value="F:toxin activity"/>
    <property type="evidence" value="ECO:0007669"/>
    <property type="project" value="UniProtKB-KW"/>
</dbReference>
<dbReference type="GO" id="GO:0006508">
    <property type="term" value="P:proteolysis"/>
    <property type="evidence" value="ECO:0007669"/>
    <property type="project" value="UniProtKB-KW"/>
</dbReference>
<dbReference type="CDD" id="cd00190">
    <property type="entry name" value="Tryp_SPc"/>
    <property type="match status" value="1"/>
</dbReference>
<dbReference type="FunFam" id="2.40.10.10:FF:000010">
    <property type="entry name" value="Kallikrein related peptidase 11"/>
    <property type="match status" value="1"/>
</dbReference>
<dbReference type="Gene3D" id="2.40.10.10">
    <property type="entry name" value="Trypsin-like serine proteases"/>
    <property type="match status" value="2"/>
</dbReference>
<dbReference type="InterPro" id="IPR009003">
    <property type="entry name" value="Peptidase_S1_PA"/>
</dbReference>
<dbReference type="InterPro" id="IPR043504">
    <property type="entry name" value="Peptidase_S1_PA_chymotrypsin"/>
</dbReference>
<dbReference type="InterPro" id="IPR001314">
    <property type="entry name" value="Peptidase_S1A"/>
</dbReference>
<dbReference type="InterPro" id="IPR001254">
    <property type="entry name" value="Trypsin_dom"/>
</dbReference>
<dbReference type="InterPro" id="IPR018114">
    <property type="entry name" value="TRYPSIN_HIS"/>
</dbReference>
<dbReference type="InterPro" id="IPR033116">
    <property type="entry name" value="TRYPSIN_SER"/>
</dbReference>
<dbReference type="PANTHER" id="PTHR24271:SF47">
    <property type="entry name" value="KALLIKREIN-1"/>
    <property type="match status" value="1"/>
</dbReference>
<dbReference type="PANTHER" id="PTHR24271">
    <property type="entry name" value="KALLIKREIN-RELATED"/>
    <property type="match status" value="1"/>
</dbReference>
<dbReference type="Pfam" id="PF00089">
    <property type="entry name" value="Trypsin"/>
    <property type="match status" value="1"/>
</dbReference>
<dbReference type="PRINTS" id="PR00722">
    <property type="entry name" value="CHYMOTRYPSIN"/>
</dbReference>
<dbReference type="SMART" id="SM00020">
    <property type="entry name" value="Tryp_SPc"/>
    <property type="match status" value="1"/>
</dbReference>
<dbReference type="SUPFAM" id="SSF50494">
    <property type="entry name" value="Trypsin-like serine proteases"/>
    <property type="match status" value="1"/>
</dbReference>
<dbReference type="PROSITE" id="PS50240">
    <property type="entry name" value="TRYPSIN_DOM"/>
    <property type="match status" value="1"/>
</dbReference>
<dbReference type="PROSITE" id="PS00134">
    <property type="entry name" value="TRYPSIN_HIS"/>
    <property type="match status" value="1"/>
</dbReference>
<dbReference type="PROSITE" id="PS00135">
    <property type="entry name" value="TRYPSIN_SER"/>
    <property type="match status" value="1"/>
</dbReference>
<protein>
    <recommendedName>
        <fullName>Snake venom serine protease</fullName>
        <shortName>SVSP</shortName>
        <ecNumber>3.4.21.-</ecNumber>
    </recommendedName>
</protein>